<accession>C4XRE2</accession>
<reference key="1">
    <citation type="journal article" date="2009" name="Genome Res.">
        <title>Whole genome sequence of Desulfovibrio magneticus strain RS-1 revealed common gene clusters in magnetotactic bacteria.</title>
        <authorList>
            <person name="Nakazawa H."/>
            <person name="Arakaki A."/>
            <person name="Narita-Yamada S."/>
            <person name="Yashiro I."/>
            <person name="Jinno K."/>
            <person name="Aoki N."/>
            <person name="Tsuruyama A."/>
            <person name="Okamura Y."/>
            <person name="Tanikawa S."/>
            <person name="Fujita N."/>
            <person name="Takeyama H."/>
            <person name="Matsunaga T."/>
        </authorList>
    </citation>
    <scope>NUCLEOTIDE SEQUENCE [LARGE SCALE GENOMIC DNA]</scope>
    <source>
        <strain>ATCC 700980 / DSM 13731 / RS-1</strain>
    </source>
</reference>
<evidence type="ECO:0000255" key="1">
    <source>
        <dbReference type="HAMAP-Rule" id="MF_00366"/>
    </source>
</evidence>
<feature type="chain" id="PRO_1000205514" description="DNA-directed RNA polymerase subunit omega">
    <location>
        <begin position="1"/>
        <end position="74"/>
    </location>
</feature>
<dbReference type="EC" id="2.7.7.6" evidence="1"/>
<dbReference type="EMBL" id="AP010904">
    <property type="protein sequence ID" value="BAH75487.1"/>
    <property type="molecule type" value="Genomic_DNA"/>
</dbReference>
<dbReference type="RefSeq" id="WP_015860678.1">
    <property type="nucleotide sequence ID" value="NC_012796.1"/>
</dbReference>
<dbReference type="SMR" id="C4XRE2"/>
<dbReference type="STRING" id="573370.DMR_19960"/>
<dbReference type="KEGG" id="dma:DMR_19960"/>
<dbReference type="eggNOG" id="COG1758">
    <property type="taxonomic scope" value="Bacteria"/>
</dbReference>
<dbReference type="HOGENOM" id="CLU_125406_5_1_7"/>
<dbReference type="OrthoDB" id="9796300at2"/>
<dbReference type="Proteomes" id="UP000009071">
    <property type="component" value="Chromosome"/>
</dbReference>
<dbReference type="GO" id="GO:0000428">
    <property type="term" value="C:DNA-directed RNA polymerase complex"/>
    <property type="evidence" value="ECO:0007669"/>
    <property type="project" value="UniProtKB-KW"/>
</dbReference>
<dbReference type="GO" id="GO:0003677">
    <property type="term" value="F:DNA binding"/>
    <property type="evidence" value="ECO:0007669"/>
    <property type="project" value="UniProtKB-UniRule"/>
</dbReference>
<dbReference type="GO" id="GO:0003899">
    <property type="term" value="F:DNA-directed RNA polymerase activity"/>
    <property type="evidence" value="ECO:0007669"/>
    <property type="project" value="UniProtKB-UniRule"/>
</dbReference>
<dbReference type="GO" id="GO:0006351">
    <property type="term" value="P:DNA-templated transcription"/>
    <property type="evidence" value="ECO:0007669"/>
    <property type="project" value="UniProtKB-UniRule"/>
</dbReference>
<dbReference type="Gene3D" id="3.90.940.10">
    <property type="match status" value="1"/>
</dbReference>
<dbReference type="HAMAP" id="MF_00366">
    <property type="entry name" value="RNApol_bact_RpoZ"/>
    <property type="match status" value="1"/>
</dbReference>
<dbReference type="InterPro" id="IPR003716">
    <property type="entry name" value="DNA-dir_RNA_pol_omega"/>
</dbReference>
<dbReference type="InterPro" id="IPR006110">
    <property type="entry name" value="Pol_omega/Rpo6/RPB6"/>
</dbReference>
<dbReference type="InterPro" id="IPR036161">
    <property type="entry name" value="RPB6/omega-like_sf"/>
</dbReference>
<dbReference type="NCBIfam" id="TIGR00690">
    <property type="entry name" value="rpoZ"/>
    <property type="match status" value="1"/>
</dbReference>
<dbReference type="PANTHER" id="PTHR34476">
    <property type="entry name" value="DNA-DIRECTED RNA POLYMERASE SUBUNIT OMEGA"/>
    <property type="match status" value="1"/>
</dbReference>
<dbReference type="PANTHER" id="PTHR34476:SF1">
    <property type="entry name" value="DNA-DIRECTED RNA POLYMERASE SUBUNIT OMEGA"/>
    <property type="match status" value="1"/>
</dbReference>
<dbReference type="Pfam" id="PF01192">
    <property type="entry name" value="RNA_pol_Rpb6"/>
    <property type="match status" value="1"/>
</dbReference>
<dbReference type="SMART" id="SM01409">
    <property type="entry name" value="RNA_pol_Rpb6"/>
    <property type="match status" value="1"/>
</dbReference>
<dbReference type="SUPFAM" id="SSF63562">
    <property type="entry name" value="RPB6/omega subunit-like"/>
    <property type="match status" value="1"/>
</dbReference>
<gene>
    <name evidence="1" type="primary">rpoZ</name>
    <name type="ordered locus">DMR_19960</name>
</gene>
<protein>
    <recommendedName>
        <fullName evidence="1">DNA-directed RNA polymerase subunit omega</fullName>
        <shortName evidence="1">RNAP omega subunit</shortName>
        <ecNumber evidence="1">2.7.7.6</ecNumber>
    </recommendedName>
    <alternativeName>
        <fullName evidence="1">RNA polymerase omega subunit</fullName>
    </alternativeName>
    <alternativeName>
        <fullName evidence="1">Transcriptase subunit omega</fullName>
    </alternativeName>
</protein>
<sequence length="74" mass="8363">MARITVEDCLEKINNRFLIVQMAIKRVHQYREGYDPLVECKNKEVVTALREIAAGEVMPADSIEEAGVFLPATK</sequence>
<name>RPOZ_SOLM1</name>
<comment type="function">
    <text evidence="1">Promotes RNA polymerase assembly. Latches the N- and C-terminal regions of the beta' subunit thereby facilitating its interaction with the beta and alpha subunits.</text>
</comment>
<comment type="catalytic activity">
    <reaction evidence="1">
        <text>RNA(n) + a ribonucleoside 5'-triphosphate = RNA(n+1) + diphosphate</text>
        <dbReference type="Rhea" id="RHEA:21248"/>
        <dbReference type="Rhea" id="RHEA-COMP:14527"/>
        <dbReference type="Rhea" id="RHEA-COMP:17342"/>
        <dbReference type="ChEBI" id="CHEBI:33019"/>
        <dbReference type="ChEBI" id="CHEBI:61557"/>
        <dbReference type="ChEBI" id="CHEBI:140395"/>
        <dbReference type="EC" id="2.7.7.6"/>
    </reaction>
</comment>
<comment type="subunit">
    <text evidence="1">The RNAP catalytic core consists of 2 alpha, 1 beta, 1 beta' and 1 omega subunit. When a sigma factor is associated with the core the holoenzyme is formed, which can initiate transcription.</text>
</comment>
<comment type="similarity">
    <text evidence="1">Belongs to the RNA polymerase subunit omega family.</text>
</comment>
<keyword id="KW-0240">DNA-directed RNA polymerase</keyword>
<keyword id="KW-0548">Nucleotidyltransferase</keyword>
<keyword id="KW-0804">Transcription</keyword>
<keyword id="KW-0808">Transferase</keyword>
<proteinExistence type="inferred from homology"/>
<organism>
    <name type="scientific">Solidesulfovibrio magneticus (strain ATCC 700980 / DSM 13731 / RS-1)</name>
    <name type="common">Desulfovibrio magneticus</name>
    <dbReference type="NCBI Taxonomy" id="573370"/>
    <lineage>
        <taxon>Bacteria</taxon>
        <taxon>Pseudomonadati</taxon>
        <taxon>Thermodesulfobacteriota</taxon>
        <taxon>Desulfovibrionia</taxon>
        <taxon>Desulfovibrionales</taxon>
        <taxon>Desulfovibrionaceae</taxon>
        <taxon>Solidesulfovibrio</taxon>
    </lineage>
</organism>